<name>ALR_LEPCP</name>
<comment type="function">
    <text evidence="1">Catalyzes the interconversion of L-alanine and D-alanine. May also act on other amino acids.</text>
</comment>
<comment type="catalytic activity">
    <reaction evidence="1">
        <text>L-alanine = D-alanine</text>
        <dbReference type="Rhea" id="RHEA:20249"/>
        <dbReference type="ChEBI" id="CHEBI:57416"/>
        <dbReference type="ChEBI" id="CHEBI:57972"/>
        <dbReference type="EC" id="5.1.1.1"/>
    </reaction>
</comment>
<comment type="cofactor">
    <cofactor evidence="1">
        <name>pyridoxal 5'-phosphate</name>
        <dbReference type="ChEBI" id="CHEBI:597326"/>
    </cofactor>
</comment>
<comment type="pathway">
    <text evidence="1">Amino-acid biosynthesis; D-alanine biosynthesis; D-alanine from L-alanine: step 1/1.</text>
</comment>
<comment type="similarity">
    <text evidence="1">Belongs to the alanine racemase family.</text>
</comment>
<dbReference type="EC" id="5.1.1.1" evidence="1"/>
<dbReference type="EMBL" id="CP001013">
    <property type="protein sequence ID" value="ACB33192.1"/>
    <property type="molecule type" value="Genomic_DNA"/>
</dbReference>
<dbReference type="RefSeq" id="WP_012345954.1">
    <property type="nucleotide sequence ID" value="NC_010524.1"/>
</dbReference>
<dbReference type="SMR" id="B1Y2H6"/>
<dbReference type="STRING" id="395495.Lcho_0920"/>
<dbReference type="KEGG" id="lch:Lcho_0920"/>
<dbReference type="eggNOG" id="COG0787">
    <property type="taxonomic scope" value="Bacteria"/>
</dbReference>
<dbReference type="HOGENOM" id="CLU_028393_1_0_4"/>
<dbReference type="OrthoDB" id="9813814at2"/>
<dbReference type="UniPathway" id="UPA00042">
    <property type="reaction ID" value="UER00497"/>
</dbReference>
<dbReference type="Proteomes" id="UP000001693">
    <property type="component" value="Chromosome"/>
</dbReference>
<dbReference type="GO" id="GO:0005829">
    <property type="term" value="C:cytosol"/>
    <property type="evidence" value="ECO:0007669"/>
    <property type="project" value="TreeGrafter"/>
</dbReference>
<dbReference type="GO" id="GO:0008784">
    <property type="term" value="F:alanine racemase activity"/>
    <property type="evidence" value="ECO:0007669"/>
    <property type="project" value="UniProtKB-UniRule"/>
</dbReference>
<dbReference type="GO" id="GO:0030170">
    <property type="term" value="F:pyridoxal phosphate binding"/>
    <property type="evidence" value="ECO:0007669"/>
    <property type="project" value="UniProtKB-UniRule"/>
</dbReference>
<dbReference type="GO" id="GO:0030632">
    <property type="term" value="P:D-alanine biosynthetic process"/>
    <property type="evidence" value="ECO:0007669"/>
    <property type="project" value="UniProtKB-UniRule"/>
</dbReference>
<dbReference type="CDD" id="cd06827">
    <property type="entry name" value="PLPDE_III_AR_proteobact"/>
    <property type="match status" value="1"/>
</dbReference>
<dbReference type="FunFam" id="3.20.20.10:FF:000002">
    <property type="entry name" value="Alanine racemase"/>
    <property type="match status" value="1"/>
</dbReference>
<dbReference type="Gene3D" id="3.20.20.10">
    <property type="entry name" value="Alanine racemase"/>
    <property type="match status" value="1"/>
</dbReference>
<dbReference type="Gene3D" id="2.40.37.10">
    <property type="entry name" value="Lyase, Ornithine Decarboxylase, Chain A, domain 1"/>
    <property type="match status" value="1"/>
</dbReference>
<dbReference type="HAMAP" id="MF_01201">
    <property type="entry name" value="Ala_racemase"/>
    <property type="match status" value="1"/>
</dbReference>
<dbReference type="InterPro" id="IPR000821">
    <property type="entry name" value="Ala_racemase"/>
</dbReference>
<dbReference type="InterPro" id="IPR009006">
    <property type="entry name" value="Ala_racemase/Decarboxylase_C"/>
</dbReference>
<dbReference type="InterPro" id="IPR011079">
    <property type="entry name" value="Ala_racemase_C"/>
</dbReference>
<dbReference type="InterPro" id="IPR001608">
    <property type="entry name" value="Ala_racemase_N"/>
</dbReference>
<dbReference type="InterPro" id="IPR020622">
    <property type="entry name" value="Ala_racemase_pyridoxalP-BS"/>
</dbReference>
<dbReference type="InterPro" id="IPR029066">
    <property type="entry name" value="PLP-binding_barrel"/>
</dbReference>
<dbReference type="NCBIfam" id="TIGR00492">
    <property type="entry name" value="alr"/>
    <property type="match status" value="1"/>
</dbReference>
<dbReference type="PANTHER" id="PTHR30511">
    <property type="entry name" value="ALANINE RACEMASE"/>
    <property type="match status" value="1"/>
</dbReference>
<dbReference type="PANTHER" id="PTHR30511:SF0">
    <property type="entry name" value="ALANINE RACEMASE, CATABOLIC-RELATED"/>
    <property type="match status" value="1"/>
</dbReference>
<dbReference type="Pfam" id="PF00842">
    <property type="entry name" value="Ala_racemase_C"/>
    <property type="match status" value="1"/>
</dbReference>
<dbReference type="Pfam" id="PF01168">
    <property type="entry name" value="Ala_racemase_N"/>
    <property type="match status" value="1"/>
</dbReference>
<dbReference type="PRINTS" id="PR00992">
    <property type="entry name" value="ALARACEMASE"/>
</dbReference>
<dbReference type="SMART" id="SM01005">
    <property type="entry name" value="Ala_racemase_C"/>
    <property type="match status" value="1"/>
</dbReference>
<dbReference type="SUPFAM" id="SSF50621">
    <property type="entry name" value="Alanine racemase C-terminal domain-like"/>
    <property type="match status" value="1"/>
</dbReference>
<dbReference type="SUPFAM" id="SSF51419">
    <property type="entry name" value="PLP-binding barrel"/>
    <property type="match status" value="1"/>
</dbReference>
<dbReference type="PROSITE" id="PS00395">
    <property type="entry name" value="ALANINE_RACEMASE"/>
    <property type="match status" value="1"/>
</dbReference>
<organism>
    <name type="scientific">Leptothrix cholodnii (strain ATCC 51168 / LMG 8142 / SP-6)</name>
    <name type="common">Leptothrix discophora (strain SP-6)</name>
    <dbReference type="NCBI Taxonomy" id="395495"/>
    <lineage>
        <taxon>Bacteria</taxon>
        <taxon>Pseudomonadati</taxon>
        <taxon>Pseudomonadota</taxon>
        <taxon>Betaproteobacteria</taxon>
        <taxon>Burkholderiales</taxon>
        <taxon>Sphaerotilaceae</taxon>
        <taxon>Leptothrix</taxon>
    </lineage>
</organism>
<gene>
    <name type="primary">alr</name>
    <name type="ordered locus">Lcho_0920</name>
</gene>
<protein>
    <recommendedName>
        <fullName evidence="1">Alanine racemase</fullName>
        <ecNumber evidence="1">5.1.1.1</ecNumber>
    </recommendedName>
</protein>
<accession>B1Y2H6</accession>
<reference key="1">
    <citation type="submission" date="2008-03" db="EMBL/GenBank/DDBJ databases">
        <title>Complete sequence of Leptothrix cholodnii SP-6.</title>
        <authorList>
            <consortium name="US DOE Joint Genome Institute"/>
            <person name="Copeland A."/>
            <person name="Lucas S."/>
            <person name="Lapidus A."/>
            <person name="Glavina del Rio T."/>
            <person name="Dalin E."/>
            <person name="Tice H."/>
            <person name="Bruce D."/>
            <person name="Goodwin L."/>
            <person name="Pitluck S."/>
            <person name="Chertkov O."/>
            <person name="Brettin T."/>
            <person name="Detter J.C."/>
            <person name="Han C."/>
            <person name="Kuske C.R."/>
            <person name="Schmutz J."/>
            <person name="Larimer F."/>
            <person name="Land M."/>
            <person name="Hauser L."/>
            <person name="Kyrpides N."/>
            <person name="Lykidis A."/>
            <person name="Emerson D."/>
            <person name="Richardson P."/>
        </authorList>
    </citation>
    <scope>NUCLEOTIDE SEQUENCE [LARGE SCALE GENOMIC DNA]</scope>
    <source>
        <strain>ATCC 51168 / LMG 8142 / SP-6</strain>
    </source>
</reference>
<proteinExistence type="inferred from homology"/>
<sequence length="377" mass="41105">MPRPIEALIHPDALAHNLLQARRHAGDAKLWAVIKANAYGHGIERVWPALLGADGLAMLDLDEAQRVRNLGWRGPVLLLEGCFEARDLELCSRLNLWHVVHHDDQIGWLAAHKTHQPHRVFLKMNSGMNRLGFTPQALRSAWVRLNALPQVDEISLMTHFSDADSPRPGADGIAAQVARFVEATHDLPGERSLSNSAAILRHCERAEVRADWVRSGILSYGSSPDHPQHDIGHWNLRPAMTLRSRLIATQQLQAGDSVGYGSRFVAQQPMRIGIVACGYADGYPRHAPGDTGNATPVLVDGLRTHTVGRVSMDMLAVDLSELPAAGVGSEVTLWGHGPHGSLLPIDAVAQAAGTIGYELMCALAQRVPTHVQDLEPR</sequence>
<feature type="chain" id="PRO_1000138612" description="Alanine racemase">
    <location>
        <begin position="1"/>
        <end position="377"/>
    </location>
</feature>
<feature type="active site" description="Proton acceptor; specific for D-alanine" evidence="1">
    <location>
        <position position="35"/>
    </location>
</feature>
<feature type="active site" description="Proton acceptor; specific for L-alanine" evidence="1">
    <location>
        <position position="260"/>
    </location>
</feature>
<feature type="binding site" evidence="1">
    <location>
        <position position="130"/>
    </location>
    <ligand>
        <name>substrate</name>
    </ligand>
</feature>
<feature type="binding site" evidence="1">
    <location>
        <position position="312"/>
    </location>
    <ligand>
        <name>substrate</name>
    </ligand>
</feature>
<feature type="modified residue" description="N6-(pyridoxal phosphate)lysine" evidence="1">
    <location>
        <position position="35"/>
    </location>
</feature>
<evidence type="ECO:0000255" key="1">
    <source>
        <dbReference type="HAMAP-Rule" id="MF_01201"/>
    </source>
</evidence>
<keyword id="KW-0413">Isomerase</keyword>
<keyword id="KW-0663">Pyridoxal phosphate</keyword>
<keyword id="KW-1185">Reference proteome</keyword>